<evidence type="ECO:0000255" key="1">
    <source>
        <dbReference type="HAMAP-Rule" id="MF_01147"/>
    </source>
</evidence>
<comment type="function">
    <text evidence="1">Catalyzes the transfer of the diacylglyceryl group from phosphatidylglycerol to the sulfhydryl group of the N-terminal cysteine of a prolipoprotein, the first step in the formation of mature lipoproteins.</text>
</comment>
<comment type="catalytic activity">
    <reaction evidence="1">
        <text>L-cysteinyl-[prolipoprotein] + a 1,2-diacyl-sn-glycero-3-phospho-(1'-sn-glycerol) = an S-1,2-diacyl-sn-glyceryl-L-cysteinyl-[prolipoprotein] + sn-glycerol 1-phosphate + H(+)</text>
        <dbReference type="Rhea" id="RHEA:56712"/>
        <dbReference type="Rhea" id="RHEA-COMP:14679"/>
        <dbReference type="Rhea" id="RHEA-COMP:14680"/>
        <dbReference type="ChEBI" id="CHEBI:15378"/>
        <dbReference type="ChEBI" id="CHEBI:29950"/>
        <dbReference type="ChEBI" id="CHEBI:57685"/>
        <dbReference type="ChEBI" id="CHEBI:64716"/>
        <dbReference type="ChEBI" id="CHEBI:140658"/>
        <dbReference type="EC" id="2.5.1.145"/>
    </reaction>
</comment>
<comment type="pathway">
    <text evidence="1">Protein modification; lipoprotein biosynthesis (diacylglyceryl transfer).</text>
</comment>
<comment type="subcellular location">
    <subcellularLocation>
        <location evidence="1">Cell inner membrane</location>
        <topology evidence="1">Multi-pass membrane protein</topology>
    </subcellularLocation>
</comment>
<comment type="similarity">
    <text evidence="1">Belongs to the Lgt family.</text>
</comment>
<sequence>MLVHPQFNPIALDLGFFQIHWYGLTYLAAFGLFYFLATRRIRQAPYASGSGPAWTARDVEDLLFFGVVGVILGGRLGYVLFYKPTYYLANLSEIPAVWKGGMAFHGGLLGVIVAMALFAHLRGRKFFEVTDLVAPCVPTGLAMGRIGNFINGELWGRAADASLPWAMVFPQSGSDLPRHPSQLYQFALEGLALFALTWFYGHSRSAHVGADGRPIWGRVSGLFVGGYGVFRFIAEYFREPDSFLGLLAFNLSMGQWLCVPMIVAGALIWWSAGRRRV</sequence>
<gene>
    <name evidence="1" type="primary">lgt</name>
    <name type="ordered locus">Lcho_1492</name>
</gene>
<reference key="1">
    <citation type="submission" date="2008-03" db="EMBL/GenBank/DDBJ databases">
        <title>Complete sequence of Leptothrix cholodnii SP-6.</title>
        <authorList>
            <consortium name="US DOE Joint Genome Institute"/>
            <person name="Copeland A."/>
            <person name="Lucas S."/>
            <person name="Lapidus A."/>
            <person name="Glavina del Rio T."/>
            <person name="Dalin E."/>
            <person name="Tice H."/>
            <person name="Bruce D."/>
            <person name="Goodwin L."/>
            <person name="Pitluck S."/>
            <person name="Chertkov O."/>
            <person name="Brettin T."/>
            <person name="Detter J.C."/>
            <person name="Han C."/>
            <person name="Kuske C.R."/>
            <person name="Schmutz J."/>
            <person name="Larimer F."/>
            <person name="Land M."/>
            <person name="Hauser L."/>
            <person name="Kyrpides N."/>
            <person name="Lykidis A."/>
            <person name="Emerson D."/>
            <person name="Richardson P."/>
        </authorList>
    </citation>
    <scope>NUCLEOTIDE SEQUENCE [LARGE SCALE GENOMIC DNA]</scope>
    <source>
        <strain>ATCC 51168 / LMG 8142 / SP-6</strain>
    </source>
</reference>
<feature type="chain" id="PRO_1000137437" description="Phosphatidylglycerol--prolipoprotein diacylglyceryl transferase">
    <location>
        <begin position="1"/>
        <end position="277"/>
    </location>
</feature>
<feature type="transmembrane region" description="Helical" evidence="1">
    <location>
        <begin position="16"/>
        <end position="36"/>
    </location>
</feature>
<feature type="transmembrane region" description="Helical" evidence="1">
    <location>
        <begin position="62"/>
        <end position="82"/>
    </location>
</feature>
<feature type="transmembrane region" description="Helical" evidence="1">
    <location>
        <begin position="101"/>
        <end position="121"/>
    </location>
</feature>
<feature type="transmembrane region" description="Helical" evidence="1">
    <location>
        <begin position="214"/>
        <end position="234"/>
    </location>
</feature>
<feature type="transmembrane region" description="Helical" evidence="1">
    <location>
        <begin position="243"/>
        <end position="263"/>
    </location>
</feature>
<feature type="binding site" evidence="1">
    <location>
        <position position="145"/>
    </location>
    <ligand>
        <name>a 1,2-diacyl-sn-glycero-3-phospho-(1'-sn-glycerol)</name>
        <dbReference type="ChEBI" id="CHEBI:64716"/>
    </ligand>
</feature>
<protein>
    <recommendedName>
        <fullName evidence="1">Phosphatidylglycerol--prolipoprotein diacylglyceryl transferase</fullName>
        <ecNumber evidence="1">2.5.1.145</ecNumber>
    </recommendedName>
</protein>
<proteinExistence type="inferred from homology"/>
<dbReference type="EC" id="2.5.1.145" evidence="1"/>
<dbReference type="EMBL" id="CP001013">
    <property type="protein sequence ID" value="ACB33760.1"/>
    <property type="molecule type" value="Genomic_DNA"/>
</dbReference>
<dbReference type="RefSeq" id="WP_012346522.1">
    <property type="nucleotide sequence ID" value="NC_010524.1"/>
</dbReference>
<dbReference type="SMR" id="B1Y818"/>
<dbReference type="STRING" id="395495.Lcho_1492"/>
<dbReference type="KEGG" id="lch:Lcho_1492"/>
<dbReference type="eggNOG" id="COG0682">
    <property type="taxonomic scope" value="Bacteria"/>
</dbReference>
<dbReference type="HOGENOM" id="CLU_013386_1_0_4"/>
<dbReference type="OrthoDB" id="871140at2"/>
<dbReference type="UniPathway" id="UPA00664"/>
<dbReference type="Proteomes" id="UP000001693">
    <property type="component" value="Chromosome"/>
</dbReference>
<dbReference type="GO" id="GO:0005886">
    <property type="term" value="C:plasma membrane"/>
    <property type="evidence" value="ECO:0007669"/>
    <property type="project" value="UniProtKB-SubCell"/>
</dbReference>
<dbReference type="GO" id="GO:0008961">
    <property type="term" value="F:phosphatidylglycerol-prolipoprotein diacylglyceryl transferase activity"/>
    <property type="evidence" value="ECO:0007669"/>
    <property type="project" value="UniProtKB-UniRule"/>
</dbReference>
<dbReference type="GO" id="GO:0042158">
    <property type="term" value="P:lipoprotein biosynthetic process"/>
    <property type="evidence" value="ECO:0007669"/>
    <property type="project" value="UniProtKB-UniRule"/>
</dbReference>
<dbReference type="HAMAP" id="MF_01147">
    <property type="entry name" value="Lgt"/>
    <property type="match status" value="1"/>
</dbReference>
<dbReference type="InterPro" id="IPR001640">
    <property type="entry name" value="Lgt"/>
</dbReference>
<dbReference type="NCBIfam" id="TIGR00544">
    <property type="entry name" value="lgt"/>
    <property type="match status" value="1"/>
</dbReference>
<dbReference type="PANTHER" id="PTHR30589:SF0">
    <property type="entry name" value="PHOSPHATIDYLGLYCEROL--PROLIPOPROTEIN DIACYLGLYCERYL TRANSFERASE"/>
    <property type="match status" value="1"/>
</dbReference>
<dbReference type="PANTHER" id="PTHR30589">
    <property type="entry name" value="PROLIPOPROTEIN DIACYLGLYCERYL TRANSFERASE"/>
    <property type="match status" value="1"/>
</dbReference>
<dbReference type="Pfam" id="PF01790">
    <property type="entry name" value="LGT"/>
    <property type="match status" value="1"/>
</dbReference>
<dbReference type="PROSITE" id="PS01311">
    <property type="entry name" value="LGT"/>
    <property type="match status" value="1"/>
</dbReference>
<accession>B1Y818</accession>
<keyword id="KW-0997">Cell inner membrane</keyword>
<keyword id="KW-1003">Cell membrane</keyword>
<keyword id="KW-0472">Membrane</keyword>
<keyword id="KW-1185">Reference proteome</keyword>
<keyword id="KW-0808">Transferase</keyword>
<keyword id="KW-0812">Transmembrane</keyword>
<keyword id="KW-1133">Transmembrane helix</keyword>
<organism>
    <name type="scientific">Leptothrix cholodnii (strain ATCC 51168 / LMG 8142 / SP-6)</name>
    <name type="common">Leptothrix discophora (strain SP-6)</name>
    <dbReference type="NCBI Taxonomy" id="395495"/>
    <lineage>
        <taxon>Bacteria</taxon>
        <taxon>Pseudomonadati</taxon>
        <taxon>Pseudomonadota</taxon>
        <taxon>Betaproteobacteria</taxon>
        <taxon>Burkholderiales</taxon>
        <taxon>Sphaerotilaceae</taxon>
        <taxon>Leptothrix</taxon>
    </lineage>
</organism>
<name>LGT_LEPCP</name>